<keyword id="KW-0027">Amidation</keyword>
<keyword id="KW-0903">Direct protein sequencing</keyword>
<keyword id="KW-0527">Neuropeptide</keyword>
<keyword id="KW-0964">Secreted</keyword>
<dbReference type="GO" id="GO:0005576">
    <property type="term" value="C:extracellular region"/>
    <property type="evidence" value="ECO:0007669"/>
    <property type="project" value="UniProtKB-SubCell"/>
</dbReference>
<dbReference type="GO" id="GO:0007218">
    <property type="term" value="P:neuropeptide signaling pathway"/>
    <property type="evidence" value="ECO:0007669"/>
    <property type="project" value="UniProtKB-KW"/>
</dbReference>
<dbReference type="InterPro" id="IPR013231">
    <property type="entry name" value="Periviscerokinin"/>
</dbReference>
<dbReference type="Pfam" id="PF08259">
    <property type="entry name" value="Periviscerokin"/>
    <property type="match status" value="1"/>
</dbReference>
<name>PVK1_HOSCA</name>
<evidence type="ECO:0000255" key="1"/>
<evidence type="ECO:0000269" key="2">
    <source>
    </source>
</evidence>
<evidence type="ECO:0000303" key="3">
    <source>
    </source>
</evidence>
<evidence type="ECO:0000305" key="4"/>
<sequence length="11" mass="1105">GSTGLIPFGRT</sequence>
<proteinExistence type="evidence at protein level"/>
<reference evidence="4" key="1">
    <citation type="journal article" date="2009" name="BMC Evol. Biol.">
        <title>A proteomic approach for studying insect phylogeny: CAPA peptides of ancient insect taxa (Dictyoptera, Blattoptera) as a test case.</title>
        <authorList>
            <person name="Roth S."/>
            <person name="Fromm B."/>
            <person name="Gaede G."/>
            <person name="Predel R."/>
        </authorList>
    </citation>
    <scope>PROTEIN SEQUENCE</scope>
    <scope>AMIDATION AT THR-11</scope>
    <source>
        <tissue evidence="2">Abdominal perisympathetic organs</tissue>
    </source>
</reference>
<feature type="peptide" id="PRO_0000378747" description="Periviscerokinin-1" evidence="2">
    <location>
        <begin position="1"/>
        <end position="11"/>
    </location>
</feature>
<feature type="modified residue" description="Threonine amide" evidence="2">
    <location>
        <position position="11"/>
    </location>
</feature>
<protein>
    <recommendedName>
        <fullName evidence="3">Periviscerokinin-1</fullName>
        <shortName evidence="3">HosCa-PVK-1</shortName>
    </recommendedName>
</protein>
<comment type="function">
    <text evidence="4">Mediates visceral muscle contractile activity (myotropic activity).</text>
</comment>
<comment type="subcellular location">
    <subcellularLocation>
        <location evidence="4">Secreted</location>
    </subcellularLocation>
</comment>
<comment type="similarity">
    <text evidence="1">Belongs to the periviscerokinin family.</text>
</comment>
<accession>P85793</accession>
<organism>
    <name type="scientific">Hostilia carinata</name>
    <name type="common">Cockroach</name>
    <dbReference type="NCBI Taxonomy" id="645593"/>
    <lineage>
        <taxon>Eukaryota</taxon>
        <taxon>Metazoa</taxon>
        <taxon>Ecdysozoa</taxon>
        <taxon>Arthropoda</taxon>
        <taxon>Hexapoda</taxon>
        <taxon>Insecta</taxon>
        <taxon>Pterygota</taxon>
        <taxon>Neoptera</taxon>
        <taxon>Polyneoptera</taxon>
        <taxon>Dictyoptera</taxon>
        <taxon>Blattodea</taxon>
        <taxon>Blaberoidea</taxon>
        <taxon>Blaberidae</taxon>
        <taxon>Perisphaerinae</taxon>
        <taxon>Hostilia</taxon>
    </lineage>
</organism>